<feature type="chain" id="PRO_0000275811" description="Photosystem II reaction center protein I">
    <location>
        <begin position="1"/>
        <end position="36"/>
    </location>
</feature>
<feature type="transmembrane region" description="Helical" evidence="1">
    <location>
        <begin position="4"/>
        <end position="24"/>
    </location>
</feature>
<geneLocation type="chloroplast"/>
<dbReference type="EMBL" id="DQ231562">
    <property type="protein sequence ID" value="ABB90027.1"/>
    <property type="molecule type" value="Genomic_DNA"/>
</dbReference>
<dbReference type="EMBL" id="DQ386163">
    <property type="protein sequence ID" value="ABD47041.1"/>
    <property type="molecule type" value="Genomic_DNA"/>
</dbReference>
<dbReference type="RefSeq" id="YP_635623.1">
    <property type="nucleotide sequence ID" value="NC_008096.2"/>
</dbReference>
<dbReference type="SMR" id="Q2VEJ2"/>
<dbReference type="FunCoup" id="Q2VEJ2">
    <property type="interactions" value="69"/>
</dbReference>
<dbReference type="STRING" id="4113.Q2VEJ2"/>
<dbReference type="GeneID" id="4099953"/>
<dbReference type="KEGG" id="sot:4099953"/>
<dbReference type="InParanoid" id="Q2VEJ2"/>
<dbReference type="OrthoDB" id="564007at2759"/>
<dbReference type="Proteomes" id="UP000011115">
    <property type="component" value="Unassembled WGS sequence"/>
</dbReference>
<dbReference type="GO" id="GO:0009535">
    <property type="term" value="C:chloroplast thylakoid membrane"/>
    <property type="evidence" value="ECO:0007669"/>
    <property type="project" value="UniProtKB-SubCell"/>
</dbReference>
<dbReference type="GO" id="GO:0009539">
    <property type="term" value="C:photosystem II reaction center"/>
    <property type="evidence" value="ECO:0007669"/>
    <property type="project" value="InterPro"/>
</dbReference>
<dbReference type="GO" id="GO:0015979">
    <property type="term" value="P:photosynthesis"/>
    <property type="evidence" value="ECO:0007669"/>
    <property type="project" value="UniProtKB-UniRule"/>
</dbReference>
<dbReference type="HAMAP" id="MF_01316">
    <property type="entry name" value="PSII_PsbI"/>
    <property type="match status" value="1"/>
</dbReference>
<dbReference type="InterPro" id="IPR003686">
    <property type="entry name" value="PSII_PsbI"/>
</dbReference>
<dbReference type="InterPro" id="IPR037271">
    <property type="entry name" value="PSII_PsbI_sf"/>
</dbReference>
<dbReference type="NCBIfam" id="NF002735">
    <property type="entry name" value="PRK02655.1"/>
    <property type="match status" value="1"/>
</dbReference>
<dbReference type="PANTHER" id="PTHR35772">
    <property type="entry name" value="PHOTOSYSTEM II REACTION CENTER PROTEIN I"/>
    <property type="match status" value="1"/>
</dbReference>
<dbReference type="PANTHER" id="PTHR35772:SF1">
    <property type="entry name" value="PHOTOSYSTEM II REACTION CENTER PROTEIN I"/>
    <property type="match status" value="1"/>
</dbReference>
<dbReference type="Pfam" id="PF02532">
    <property type="entry name" value="PsbI"/>
    <property type="match status" value="1"/>
</dbReference>
<dbReference type="SUPFAM" id="SSF161041">
    <property type="entry name" value="Photosystem II reaction center protein I, PsbI"/>
    <property type="match status" value="1"/>
</dbReference>
<reference key="1">
    <citation type="journal article" date="2006" name="Plant Cell Rep.">
        <title>The complete chloroplast genome sequences of Solanum tuberosum and comparative analysis with Solanaceae species identified the presence of a 241-bp deletion in cultivated potato chloroplast DNA sequence.</title>
        <authorList>
            <person name="Chung H.-J."/>
            <person name="Jung J.D."/>
            <person name="Park H.-W."/>
            <person name="Kim J.-H."/>
            <person name="Cha H.W."/>
            <person name="Min S.R."/>
            <person name="Jeong W.-J."/>
            <person name="Liu J.R."/>
        </authorList>
    </citation>
    <scope>NUCLEOTIDE SEQUENCE [LARGE SCALE GENOMIC DNA]</scope>
    <source>
        <strain>cv. Desiree</strain>
    </source>
</reference>
<reference key="2">
    <citation type="submission" date="2006-02" db="EMBL/GenBank/DDBJ databases">
        <title>Complete chloroplast genome sequences of Solanum tuberosum cultivar Desiree and comparative analyses with other Solanaceae genomes.</title>
        <authorList>
            <person name="Gargano D."/>
            <person name="Scotti N."/>
            <person name="Vezzi A."/>
            <person name="Bilardi A."/>
            <person name="Valle G."/>
            <person name="Grillo S."/>
            <person name="Cardi T."/>
        </authorList>
    </citation>
    <scope>NUCLEOTIDE SEQUENCE [LARGE SCALE GENOMIC DNA]</scope>
    <source>
        <strain>cv. Desiree</strain>
    </source>
</reference>
<keyword id="KW-0150">Chloroplast</keyword>
<keyword id="KW-0472">Membrane</keyword>
<keyword id="KW-0602">Photosynthesis</keyword>
<keyword id="KW-0604">Photosystem II</keyword>
<keyword id="KW-0934">Plastid</keyword>
<keyword id="KW-0674">Reaction center</keyword>
<keyword id="KW-1185">Reference proteome</keyword>
<keyword id="KW-0793">Thylakoid</keyword>
<keyword id="KW-0812">Transmembrane</keyword>
<keyword id="KW-1133">Transmembrane helix</keyword>
<organism>
    <name type="scientific">Solanum tuberosum</name>
    <name type="common">Potato</name>
    <dbReference type="NCBI Taxonomy" id="4113"/>
    <lineage>
        <taxon>Eukaryota</taxon>
        <taxon>Viridiplantae</taxon>
        <taxon>Streptophyta</taxon>
        <taxon>Embryophyta</taxon>
        <taxon>Tracheophyta</taxon>
        <taxon>Spermatophyta</taxon>
        <taxon>Magnoliopsida</taxon>
        <taxon>eudicotyledons</taxon>
        <taxon>Gunneridae</taxon>
        <taxon>Pentapetalae</taxon>
        <taxon>asterids</taxon>
        <taxon>lamiids</taxon>
        <taxon>Solanales</taxon>
        <taxon>Solanaceae</taxon>
        <taxon>Solanoideae</taxon>
        <taxon>Solaneae</taxon>
        <taxon>Solanum</taxon>
    </lineage>
</organism>
<protein>
    <recommendedName>
        <fullName evidence="1">Photosystem II reaction center protein I</fullName>
        <shortName evidence="1">PSII-I</shortName>
    </recommendedName>
    <alternativeName>
        <fullName evidence="1">PSII 4.8 kDa protein</fullName>
    </alternativeName>
</protein>
<comment type="function">
    <text evidence="1">One of the components of the core complex of photosystem II (PSII), required for its stability and/or assembly. PSII is a light-driven water:plastoquinone oxidoreductase that uses light energy to abstract electrons from H(2)O, generating O(2) and a proton gradient subsequently used for ATP formation. It consists of a core antenna complex that captures photons, and an electron transfer chain that converts photonic excitation into a charge separation.</text>
</comment>
<comment type="subunit">
    <text evidence="1">PSII is composed of 1 copy each of membrane proteins PsbA, PsbB, PsbC, PsbD, PsbE, PsbF, PsbH, PsbI, PsbJ, PsbK, PsbL, PsbM, PsbT, PsbX, PsbY, PsbZ, Psb30/Ycf12, at least 3 peripheral proteins of the oxygen-evolving complex and a large number of cofactors. It forms dimeric complexes.</text>
</comment>
<comment type="subcellular location">
    <subcellularLocation>
        <location evidence="1">Plastid</location>
        <location evidence="1">Chloroplast thylakoid membrane</location>
        <topology evidence="1">Single-pass membrane protein</topology>
    </subcellularLocation>
</comment>
<comment type="similarity">
    <text evidence="1">Belongs to the PsbI family.</text>
</comment>
<name>PSBI_SOLTU</name>
<proteinExistence type="inferred from homology"/>
<sequence length="36" mass="4168">MLTLKLFVYTVVIFFVSLFIFGFLSNDPGRNPGREE</sequence>
<gene>
    <name evidence="1" type="primary">psbI</name>
</gene>
<accession>Q2VEJ2</accession>
<evidence type="ECO:0000255" key="1">
    <source>
        <dbReference type="HAMAP-Rule" id="MF_01316"/>
    </source>
</evidence>